<dbReference type="EC" id="3.5.4.16" evidence="2"/>
<dbReference type="EMBL" id="CP000728">
    <property type="protein sequence ID" value="ABS41120.1"/>
    <property type="molecule type" value="Genomic_DNA"/>
</dbReference>
<dbReference type="RefSeq" id="WP_012099660.1">
    <property type="nucleotide sequence ID" value="NC_009699.1"/>
</dbReference>
<dbReference type="SMR" id="A7GDP1"/>
<dbReference type="KEGG" id="cbf:CLI_1638"/>
<dbReference type="HOGENOM" id="CLU_049768_3_2_9"/>
<dbReference type="UniPathway" id="UPA00848">
    <property type="reaction ID" value="UER00151"/>
</dbReference>
<dbReference type="Proteomes" id="UP000002410">
    <property type="component" value="Chromosome"/>
</dbReference>
<dbReference type="GO" id="GO:0005737">
    <property type="term" value="C:cytoplasm"/>
    <property type="evidence" value="ECO:0007669"/>
    <property type="project" value="TreeGrafter"/>
</dbReference>
<dbReference type="GO" id="GO:0005525">
    <property type="term" value="F:GTP binding"/>
    <property type="evidence" value="ECO:0007669"/>
    <property type="project" value="UniProtKB-KW"/>
</dbReference>
<dbReference type="GO" id="GO:0003934">
    <property type="term" value="F:GTP cyclohydrolase I activity"/>
    <property type="evidence" value="ECO:0007669"/>
    <property type="project" value="UniProtKB-UniRule"/>
</dbReference>
<dbReference type="GO" id="GO:0008270">
    <property type="term" value="F:zinc ion binding"/>
    <property type="evidence" value="ECO:0007669"/>
    <property type="project" value="UniProtKB-UniRule"/>
</dbReference>
<dbReference type="GO" id="GO:0006730">
    <property type="term" value="P:one-carbon metabolic process"/>
    <property type="evidence" value="ECO:0007669"/>
    <property type="project" value="UniProtKB-UniRule"/>
</dbReference>
<dbReference type="GO" id="GO:0006729">
    <property type="term" value="P:tetrahydrobiopterin biosynthetic process"/>
    <property type="evidence" value="ECO:0007669"/>
    <property type="project" value="TreeGrafter"/>
</dbReference>
<dbReference type="GO" id="GO:0046654">
    <property type="term" value="P:tetrahydrofolate biosynthetic process"/>
    <property type="evidence" value="ECO:0007669"/>
    <property type="project" value="UniProtKB-UniRule"/>
</dbReference>
<dbReference type="FunFam" id="1.10.286.10:FF:000007">
    <property type="entry name" value="GTP cyclohydrolase 1"/>
    <property type="match status" value="1"/>
</dbReference>
<dbReference type="FunFam" id="3.30.1130.10:FF:000001">
    <property type="entry name" value="GTP cyclohydrolase 1"/>
    <property type="match status" value="1"/>
</dbReference>
<dbReference type="Gene3D" id="1.10.286.10">
    <property type="match status" value="1"/>
</dbReference>
<dbReference type="Gene3D" id="3.30.1130.10">
    <property type="match status" value="1"/>
</dbReference>
<dbReference type="HAMAP" id="MF_00223">
    <property type="entry name" value="FolE"/>
    <property type="match status" value="1"/>
</dbReference>
<dbReference type="InterPro" id="IPR043133">
    <property type="entry name" value="GTP-CH-I_C/QueF"/>
</dbReference>
<dbReference type="InterPro" id="IPR043134">
    <property type="entry name" value="GTP-CH-I_N"/>
</dbReference>
<dbReference type="InterPro" id="IPR001474">
    <property type="entry name" value="GTP_CycHdrlase_I"/>
</dbReference>
<dbReference type="InterPro" id="IPR018234">
    <property type="entry name" value="GTP_CycHdrlase_I_CS"/>
</dbReference>
<dbReference type="InterPro" id="IPR020602">
    <property type="entry name" value="GTP_CycHdrlase_I_dom"/>
</dbReference>
<dbReference type="NCBIfam" id="TIGR00063">
    <property type="entry name" value="folE"/>
    <property type="match status" value="1"/>
</dbReference>
<dbReference type="NCBIfam" id="NF006825">
    <property type="entry name" value="PRK09347.1-2"/>
    <property type="match status" value="1"/>
</dbReference>
<dbReference type="NCBIfam" id="NF006826">
    <property type="entry name" value="PRK09347.1-3"/>
    <property type="match status" value="1"/>
</dbReference>
<dbReference type="PANTHER" id="PTHR11109:SF7">
    <property type="entry name" value="GTP CYCLOHYDROLASE 1"/>
    <property type="match status" value="1"/>
</dbReference>
<dbReference type="PANTHER" id="PTHR11109">
    <property type="entry name" value="GTP CYCLOHYDROLASE I"/>
    <property type="match status" value="1"/>
</dbReference>
<dbReference type="Pfam" id="PF01227">
    <property type="entry name" value="GTP_cyclohydroI"/>
    <property type="match status" value="1"/>
</dbReference>
<dbReference type="SUPFAM" id="SSF55620">
    <property type="entry name" value="Tetrahydrobiopterin biosynthesis enzymes-like"/>
    <property type="match status" value="1"/>
</dbReference>
<dbReference type="PROSITE" id="PS00859">
    <property type="entry name" value="GTP_CYCLOHYDROL_1_1"/>
    <property type="match status" value="1"/>
</dbReference>
<sequence>MAIDVKAIEEHIRGILIALGDNPEREGLKNTPKRVAKMYEEVFKGMCYSNDEIAEMFNVTFEDDLCINDNENDMVFMKEIEIFSHCEHHLALMYNMKVAIAYIPKKKIIGLSKIARIADMVGRRLQLQERIGSDIAEILQKVTDSEDVAVIIEGEHGCMTTRGIKKPGTKTITTTLRGKFNTDPIVSNKLMMLYTK</sequence>
<feature type="chain" id="PRO_1000043680" description="GTP cyclohydrolase 1">
    <location>
        <begin position="1"/>
        <end position="196"/>
    </location>
</feature>
<feature type="binding site" evidence="2">
    <location>
        <position position="86"/>
    </location>
    <ligand>
        <name>Zn(2+)</name>
        <dbReference type="ChEBI" id="CHEBI:29105"/>
    </ligand>
</feature>
<feature type="binding site" evidence="2">
    <location>
        <position position="89"/>
    </location>
    <ligand>
        <name>Zn(2+)</name>
        <dbReference type="ChEBI" id="CHEBI:29105"/>
    </ligand>
</feature>
<feature type="binding site" evidence="2">
    <location>
        <position position="158"/>
    </location>
    <ligand>
        <name>Zn(2+)</name>
        <dbReference type="ChEBI" id="CHEBI:29105"/>
    </ligand>
</feature>
<organism>
    <name type="scientific">Clostridium botulinum (strain Langeland / NCTC 10281 / Type F)</name>
    <dbReference type="NCBI Taxonomy" id="441772"/>
    <lineage>
        <taxon>Bacteria</taxon>
        <taxon>Bacillati</taxon>
        <taxon>Bacillota</taxon>
        <taxon>Clostridia</taxon>
        <taxon>Eubacteriales</taxon>
        <taxon>Clostridiaceae</taxon>
        <taxon>Clostridium</taxon>
    </lineage>
</organism>
<protein>
    <recommendedName>
        <fullName evidence="2">GTP cyclohydrolase 1</fullName>
        <ecNumber evidence="2">3.5.4.16</ecNumber>
    </recommendedName>
    <alternativeName>
        <fullName evidence="2">GTP cyclohydrolase I</fullName>
        <shortName evidence="2">GTP-CH-I</shortName>
    </alternativeName>
</protein>
<evidence type="ECO:0000250" key="1"/>
<evidence type="ECO:0000255" key="2">
    <source>
        <dbReference type="HAMAP-Rule" id="MF_00223"/>
    </source>
</evidence>
<reference key="1">
    <citation type="submission" date="2007-06" db="EMBL/GenBank/DDBJ databases">
        <authorList>
            <person name="Brinkac L.M."/>
            <person name="Daugherty S."/>
            <person name="Dodson R.J."/>
            <person name="Madupu R."/>
            <person name="Brown J.L."/>
            <person name="Bruce D."/>
            <person name="Detter C."/>
            <person name="Munk C."/>
            <person name="Smith L.A."/>
            <person name="Smith T.J."/>
            <person name="White O."/>
            <person name="Brettin T.S."/>
        </authorList>
    </citation>
    <scope>NUCLEOTIDE SEQUENCE [LARGE SCALE GENOMIC DNA]</scope>
    <source>
        <strain>Langeland / NCTC 10281 / Type F</strain>
    </source>
</reference>
<keyword id="KW-0342">GTP-binding</keyword>
<keyword id="KW-0378">Hydrolase</keyword>
<keyword id="KW-0479">Metal-binding</keyword>
<keyword id="KW-0547">Nucleotide-binding</keyword>
<keyword id="KW-0554">One-carbon metabolism</keyword>
<keyword id="KW-0862">Zinc</keyword>
<accession>A7GDP1</accession>
<gene>
    <name evidence="2" type="primary">folE</name>
    <name type="ordered locus">CLI_1638</name>
</gene>
<comment type="catalytic activity">
    <reaction evidence="2">
        <text>GTP + H2O = 7,8-dihydroneopterin 3'-triphosphate + formate + H(+)</text>
        <dbReference type="Rhea" id="RHEA:17473"/>
        <dbReference type="ChEBI" id="CHEBI:15377"/>
        <dbReference type="ChEBI" id="CHEBI:15378"/>
        <dbReference type="ChEBI" id="CHEBI:15740"/>
        <dbReference type="ChEBI" id="CHEBI:37565"/>
        <dbReference type="ChEBI" id="CHEBI:58462"/>
        <dbReference type="EC" id="3.5.4.16"/>
    </reaction>
</comment>
<comment type="pathway">
    <text evidence="2">Cofactor biosynthesis; 7,8-dihydroneopterin triphosphate biosynthesis; 7,8-dihydroneopterin triphosphate from GTP: step 1/1.</text>
</comment>
<comment type="subunit">
    <text evidence="1">Toroid-shaped homodecamer, composed of two pentamers of five dimers.</text>
</comment>
<comment type="similarity">
    <text evidence="2">Belongs to the GTP cyclohydrolase I family.</text>
</comment>
<proteinExistence type="inferred from homology"/>
<name>GCH1_CLOBL</name>